<organism>
    <name type="scientific">Yersinia pseudotuberculosis serotype I (strain IP32953)</name>
    <dbReference type="NCBI Taxonomy" id="273123"/>
    <lineage>
        <taxon>Bacteria</taxon>
        <taxon>Pseudomonadati</taxon>
        <taxon>Pseudomonadota</taxon>
        <taxon>Gammaproteobacteria</taxon>
        <taxon>Enterobacterales</taxon>
        <taxon>Yersiniaceae</taxon>
        <taxon>Yersinia</taxon>
    </lineage>
</organism>
<name>FLIT_YERPS</name>
<sequence length="120" mass="13869">MERHQHLLSEYQQILTLSEQMLMLATVENWDALVDLEMAYLKAVENTANITISSCSSPVLQELLRQKLRSILENEIEIKRLLQRRLDKLSELVGQSTRQQAVNRTYGQFPDQALLLGETQ</sequence>
<keyword id="KW-1005">Bacterial flagellum biogenesis</keyword>
<keyword id="KW-0143">Chaperone</keyword>
<keyword id="KW-0963">Cytoplasm</keyword>
<keyword id="KW-0678">Repressor</keyword>
<keyword id="KW-0804">Transcription</keyword>
<keyword id="KW-0805">Transcription regulation</keyword>
<evidence type="ECO:0000255" key="1">
    <source>
        <dbReference type="HAMAP-Rule" id="MF_01180"/>
    </source>
</evidence>
<reference key="1">
    <citation type="journal article" date="2004" name="Proc. Natl. Acad. Sci. U.S.A.">
        <title>Insights into the evolution of Yersinia pestis through whole-genome comparison with Yersinia pseudotuberculosis.</title>
        <authorList>
            <person name="Chain P.S.G."/>
            <person name="Carniel E."/>
            <person name="Larimer F.W."/>
            <person name="Lamerdin J."/>
            <person name="Stoutland P.O."/>
            <person name="Regala W.M."/>
            <person name="Georgescu A.M."/>
            <person name="Vergez L.M."/>
            <person name="Land M.L."/>
            <person name="Motin V.L."/>
            <person name="Brubaker R.R."/>
            <person name="Fowler J."/>
            <person name="Hinnebusch J."/>
            <person name="Marceau M."/>
            <person name="Medigue C."/>
            <person name="Simonet M."/>
            <person name="Chenal-Francisque V."/>
            <person name="Souza B."/>
            <person name="Dacheux D."/>
            <person name="Elliott J.M."/>
            <person name="Derbise A."/>
            <person name="Hauser L.J."/>
            <person name="Garcia E."/>
        </authorList>
    </citation>
    <scope>NUCLEOTIDE SEQUENCE [LARGE SCALE GENOMIC DNA]</scope>
    <source>
        <strain>IP32953</strain>
    </source>
</reference>
<gene>
    <name evidence="1" type="primary">fliT</name>
    <name type="ordered locus">YPTB1711</name>
</gene>
<protein>
    <recommendedName>
        <fullName evidence="1">Flagellar protein FliT</fullName>
    </recommendedName>
</protein>
<dbReference type="EMBL" id="BX936398">
    <property type="protein sequence ID" value="CAH20950.1"/>
    <property type="molecule type" value="Genomic_DNA"/>
</dbReference>
<dbReference type="RefSeq" id="WP_011192185.1">
    <property type="nucleotide sequence ID" value="NC_006155.1"/>
</dbReference>
<dbReference type="SMR" id="Q66BR0"/>
<dbReference type="GeneID" id="49786212"/>
<dbReference type="KEGG" id="ypo:BZ17_790"/>
<dbReference type="KEGG" id="yps:YPTB1711"/>
<dbReference type="PATRIC" id="fig|273123.14.peg.838"/>
<dbReference type="Proteomes" id="UP000001011">
    <property type="component" value="Chromosome"/>
</dbReference>
<dbReference type="GO" id="GO:0005829">
    <property type="term" value="C:cytosol"/>
    <property type="evidence" value="ECO:0007669"/>
    <property type="project" value="UniProtKB-SubCell"/>
</dbReference>
<dbReference type="GO" id="GO:0044781">
    <property type="term" value="P:bacterial-type flagellum organization"/>
    <property type="evidence" value="ECO:0007669"/>
    <property type="project" value="UniProtKB-KW"/>
</dbReference>
<dbReference type="GO" id="GO:1902209">
    <property type="term" value="P:negative regulation of bacterial-type flagellum assembly"/>
    <property type="evidence" value="ECO:0007669"/>
    <property type="project" value="UniProtKB-UniRule"/>
</dbReference>
<dbReference type="GO" id="GO:0006457">
    <property type="term" value="P:protein folding"/>
    <property type="evidence" value="ECO:0007669"/>
    <property type="project" value="UniProtKB-UniRule"/>
</dbReference>
<dbReference type="Gene3D" id="1.20.58.380">
    <property type="entry name" value="Flagellar protein flit"/>
    <property type="match status" value="1"/>
</dbReference>
<dbReference type="HAMAP" id="MF_01180">
    <property type="entry name" value="FliT"/>
    <property type="match status" value="1"/>
</dbReference>
<dbReference type="InterPro" id="IPR008622">
    <property type="entry name" value="FliT"/>
</dbReference>
<dbReference type="NCBIfam" id="NF007836">
    <property type="entry name" value="PRK10548.1"/>
    <property type="match status" value="1"/>
</dbReference>
<dbReference type="Pfam" id="PF05400">
    <property type="entry name" value="FliT"/>
    <property type="match status" value="1"/>
</dbReference>
<accession>Q66BR0</accession>
<feature type="chain" id="PRO_0000353901" description="Flagellar protein FliT">
    <location>
        <begin position="1"/>
        <end position="120"/>
    </location>
</feature>
<feature type="region of interest" description="Required for homodimerization" evidence="1">
    <location>
        <begin position="1"/>
        <end position="50"/>
    </location>
</feature>
<feature type="region of interest" description="FliD binding" evidence="1">
    <location>
        <begin position="60"/>
        <end position="98"/>
    </location>
</feature>
<proteinExistence type="inferred from homology"/>
<comment type="function">
    <text evidence="1">Dual-function protein that regulates the transcription of class 2 flagellar operons and that also acts as an export chaperone for the filament-capping protein FliD. As a transcriptional regulator, acts as an anti-FlhDC factor; it directly binds FlhC, thus inhibiting the binding of the FlhC/FlhD complex to class 2 promoters, resulting in decreased expression of class 2 flagellar operons. As a chaperone, effects FliD transition to the membrane by preventing its premature polymerization, and by directing it to the export apparatus.</text>
</comment>
<comment type="subunit">
    <text evidence="1">Homodimer. Interacts with FliD and FlhC.</text>
</comment>
<comment type="subcellular location">
    <subcellularLocation>
        <location evidence="1">Cytoplasm</location>
        <location evidence="1">Cytosol</location>
    </subcellularLocation>
</comment>
<comment type="similarity">
    <text evidence="1">Belongs to the FliT family.</text>
</comment>